<sequence length="184" mass="21749">MKTFITCTSVKNYFRQHLKTNQRISSELISYVCTILNHICHQYLQNPQAQEEEWFALIKELPIIKDGLSKEERFFSSGVKHFLHEYKITPENQEKSQKMLNAITEQLMSRLCKVFSIMIQRQGFLKTQTLMYSHLFTILNILMVADNLYGEQDPTEFFSLIIEQTKTIKKKKKSSSEEEESHEE</sequence>
<name>VF184_ASFK5</name>
<accession>P0CA87</accession>
<comment type="subcellular location">
    <subcellularLocation>
        <location evidence="1">Virion</location>
    </subcellularLocation>
</comment>
<comment type="induction">
    <text evidence="2">Expressed in the late phase of the viral replicative cycle.</text>
</comment>
<comment type="similarity">
    <text evidence="2">Belongs to the asfivirus E184L family.</text>
</comment>
<evidence type="ECO:0000250" key="1">
    <source>
        <dbReference type="UniProtKB" id="Q65193"/>
    </source>
</evidence>
<evidence type="ECO:0000305" key="2"/>
<proteinExistence type="inferred from homology"/>
<gene>
    <name type="ordered locus">Ken-137</name>
</gene>
<keyword id="KW-0426">Late protein</keyword>
<keyword id="KW-0946">Virion</keyword>
<organism>
    <name type="scientific">African swine fever virus (isolate Pig/Kenya/KEN-50/1950)</name>
    <name type="common">ASFV</name>
    <dbReference type="NCBI Taxonomy" id="561445"/>
    <lineage>
        <taxon>Viruses</taxon>
        <taxon>Varidnaviria</taxon>
        <taxon>Bamfordvirae</taxon>
        <taxon>Nucleocytoviricota</taxon>
        <taxon>Pokkesviricetes</taxon>
        <taxon>Asfuvirales</taxon>
        <taxon>Asfarviridae</taxon>
        <taxon>Asfivirus</taxon>
        <taxon>African swine fever virus</taxon>
    </lineage>
</organism>
<dbReference type="EMBL" id="AY261360">
    <property type="status" value="NOT_ANNOTATED_CDS"/>
    <property type="molecule type" value="Genomic_DNA"/>
</dbReference>
<dbReference type="SMR" id="P0CA87"/>
<dbReference type="Proteomes" id="UP000000861">
    <property type="component" value="Segment"/>
</dbReference>
<dbReference type="GO" id="GO:0044423">
    <property type="term" value="C:virion component"/>
    <property type="evidence" value="ECO:0007669"/>
    <property type="project" value="UniProtKB-KW"/>
</dbReference>
<reference key="1">
    <citation type="submission" date="2003-03" db="EMBL/GenBank/DDBJ databases">
        <title>African swine fever virus genomes.</title>
        <authorList>
            <person name="Kutish G.F."/>
            <person name="Rock D.L."/>
        </authorList>
    </citation>
    <scope>NUCLEOTIDE SEQUENCE [LARGE SCALE GENOMIC DNA]</scope>
</reference>
<protein>
    <recommendedName>
        <fullName>Uncharacterized protein E184L</fullName>
        <shortName>pE184L</shortName>
    </recommendedName>
</protein>
<organismHost>
    <name type="scientific">Ornithodoros</name>
    <name type="common">relapsing fever ticks</name>
    <dbReference type="NCBI Taxonomy" id="6937"/>
</organismHost>
<organismHost>
    <name type="scientific">Phacochoerus aethiopicus</name>
    <name type="common">Warthog</name>
    <dbReference type="NCBI Taxonomy" id="85517"/>
</organismHost>
<organismHost>
    <name type="scientific">Phacochoerus africanus</name>
    <name type="common">Warthog</name>
    <dbReference type="NCBI Taxonomy" id="41426"/>
</organismHost>
<organismHost>
    <name type="scientific">Potamochoerus larvatus</name>
    <name type="common">Bushpig</name>
    <dbReference type="NCBI Taxonomy" id="273792"/>
</organismHost>
<organismHost>
    <name type="scientific">Sus scrofa</name>
    <name type="common">Pig</name>
    <dbReference type="NCBI Taxonomy" id="9823"/>
</organismHost>
<feature type="chain" id="PRO_0000373573" description="Uncharacterized protein E184L">
    <location>
        <begin position="1"/>
        <end position="184"/>
    </location>
</feature>